<protein>
    <recommendedName>
        <fullName evidence="1">Glutamate--tRNA ligase</fullName>
        <ecNumber evidence="1">6.1.1.17</ecNumber>
    </recommendedName>
    <alternativeName>
        <fullName evidence="1">Glutamyl-tRNA synthetase</fullName>
        <shortName evidence="1">GluRS</shortName>
    </alternativeName>
</protein>
<reference key="1">
    <citation type="submission" date="2007-03" db="EMBL/GenBank/DDBJ databases">
        <title>Complete sequence of Desulfotomaculum reducens MI-1.</title>
        <authorList>
            <consortium name="US DOE Joint Genome Institute"/>
            <person name="Copeland A."/>
            <person name="Lucas S."/>
            <person name="Lapidus A."/>
            <person name="Barry K."/>
            <person name="Detter J.C."/>
            <person name="Glavina del Rio T."/>
            <person name="Hammon N."/>
            <person name="Israni S."/>
            <person name="Dalin E."/>
            <person name="Tice H."/>
            <person name="Pitluck S."/>
            <person name="Sims D."/>
            <person name="Brettin T."/>
            <person name="Bruce D."/>
            <person name="Han C."/>
            <person name="Tapia R."/>
            <person name="Schmutz J."/>
            <person name="Larimer F."/>
            <person name="Land M."/>
            <person name="Hauser L."/>
            <person name="Kyrpides N."/>
            <person name="Kim E."/>
            <person name="Tebo B.M."/>
            <person name="Richardson P."/>
        </authorList>
    </citation>
    <scope>NUCLEOTIDE SEQUENCE [LARGE SCALE GENOMIC DNA]</scope>
    <source>
        <strain>ATCC BAA-1160 / DSM 100696 / MI-1</strain>
    </source>
</reference>
<feature type="chain" id="PRO_0000367665" description="Glutamate--tRNA ligase">
    <location>
        <begin position="1"/>
        <end position="482"/>
    </location>
</feature>
<feature type="short sequence motif" description="'HIGH' region" evidence="1">
    <location>
        <begin position="9"/>
        <end position="19"/>
    </location>
</feature>
<feature type="short sequence motif" description="'KMSKS' region" evidence="1">
    <location>
        <begin position="250"/>
        <end position="254"/>
    </location>
</feature>
<feature type="binding site" evidence="1">
    <location>
        <position position="253"/>
    </location>
    <ligand>
        <name>ATP</name>
        <dbReference type="ChEBI" id="CHEBI:30616"/>
    </ligand>
</feature>
<dbReference type="EC" id="6.1.1.17" evidence="1"/>
<dbReference type="EMBL" id="CP000612">
    <property type="protein sequence ID" value="ABO48740.1"/>
    <property type="molecule type" value="Genomic_DNA"/>
</dbReference>
<dbReference type="RefSeq" id="WP_011876581.1">
    <property type="nucleotide sequence ID" value="NC_009253.1"/>
</dbReference>
<dbReference type="SMR" id="A4J0Y7"/>
<dbReference type="STRING" id="349161.Dred_0191"/>
<dbReference type="KEGG" id="drm:Dred_0191"/>
<dbReference type="eggNOG" id="COG0008">
    <property type="taxonomic scope" value="Bacteria"/>
</dbReference>
<dbReference type="HOGENOM" id="CLU_015768_6_3_9"/>
<dbReference type="OrthoDB" id="9807503at2"/>
<dbReference type="Proteomes" id="UP000001556">
    <property type="component" value="Chromosome"/>
</dbReference>
<dbReference type="GO" id="GO:0005829">
    <property type="term" value="C:cytosol"/>
    <property type="evidence" value="ECO:0007669"/>
    <property type="project" value="TreeGrafter"/>
</dbReference>
<dbReference type="GO" id="GO:0005524">
    <property type="term" value="F:ATP binding"/>
    <property type="evidence" value="ECO:0007669"/>
    <property type="project" value="UniProtKB-UniRule"/>
</dbReference>
<dbReference type="GO" id="GO:0004818">
    <property type="term" value="F:glutamate-tRNA ligase activity"/>
    <property type="evidence" value="ECO:0007669"/>
    <property type="project" value="UniProtKB-UniRule"/>
</dbReference>
<dbReference type="GO" id="GO:0000049">
    <property type="term" value="F:tRNA binding"/>
    <property type="evidence" value="ECO:0007669"/>
    <property type="project" value="InterPro"/>
</dbReference>
<dbReference type="GO" id="GO:0008270">
    <property type="term" value="F:zinc ion binding"/>
    <property type="evidence" value="ECO:0007669"/>
    <property type="project" value="InterPro"/>
</dbReference>
<dbReference type="GO" id="GO:0006424">
    <property type="term" value="P:glutamyl-tRNA aminoacylation"/>
    <property type="evidence" value="ECO:0007669"/>
    <property type="project" value="UniProtKB-UniRule"/>
</dbReference>
<dbReference type="CDD" id="cd00808">
    <property type="entry name" value="GluRS_core"/>
    <property type="match status" value="1"/>
</dbReference>
<dbReference type="FunFam" id="1.10.10.350:FF:000002">
    <property type="entry name" value="Glutamate--tRNA ligase"/>
    <property type="match status" value="1"/>
</dbReference>
<dbReference type="FunFam" id="3.40.50.620:FF:000007">
    <property type="entry name" value="Glutamate--tRNA ligase"/>
    <property type="match status" value="1"/>
</dbReference>
<dbReference type="Gene3D" id="1.10.10.350">
    <property type="match status" value="1"/>
</dbReference>
<dbReference type="Gene3D" id="1.10.8.70">
    <property type="entry name" value="Glutamate-tRNA synthetase, class I, anticodon-binding domain 1"/>
    <property type="match status" value="1"/>
</dbReference>
<dbReference type="Gene3D" id="3.40.50.620">
    <property type="entry name" value="HUPs"/>
    <property type="match status" value="1"/>
</dbReference>
<dbReference type="HAMAP" id="MF_00022">
    <property type="entry name" value="Glu_tRNA_synth_type1"/>
    <property type="match status" value="1"/>
</dbReference>
<dbReference type="InterPro" id="IPR045462">
    <property type="entry name" value="aa-tRNA-synth_I_cd-bd"/>
</dbReference>
<dbReference type="InterPro" id="IPR020751">
    <property type="entry name" value="aa-tRNA-synth_I_codon-bd_sub2"/>
</dbReference>
<dbReference type="InterPro" id="IPR001412">
    <property type="entry name" value="aa-tRNA-synth_I_CS"/>
</dbReference>
<dbReference type="InterPro" id="IPR008925">
    <property type="entry name" value="aa_tRNA-synth_I_cd-bd_sf"/>
</dbReference>
<dbReference type="InterPro" id="IPR004527">
    <property type="entry name" value="Glu-tRNA-ligase_bac/mito"/>
</dbReference>
<dbReference type="InterPro" id="IPR020752">
    <property type="entry name" value="Glu-tRNA-synth_I_codon-bd_sub1"/>
</dbReference>
<dbReference type="InterPro" id="IPR000924">
    <property type="entry name" value="Glu/Gln-tRNA-synth"/>
</dbReference>
<dbReference type="InterPro" id="IPR020058">
    <property type="entry name" value="Glu/Gln-tRNA-synth_Ib_cat-dom"/>
</dbReference>
<dbReference type="InterPro" id="IPR049940">
    <property type="entry name" value="GluQ/Sye"/>
</dbReference>
<dbReference type="InterPro" id="IPR033910">
    <property type="entry name" value="GluRS_core"/>
</dbReference>
<dbReference type="InterPro" id="IPR014729">
    <property type="entry name" value="Rossmann-like_a/b/a_fold"/>
</dbReference>
<dbReference type="NCBIfam" id="TIGR00464">
    <property type="entry name" value="gltX_bact"/>
    <property type="match status" value="1"/>
</dbReference>
<dbReference type="PANTHER" id="PTHR43311">
    <property type="entry name" value="GLUTAMATE--TRNA LIGASE"/>
    <property type="match status" value="1"/>
</dbReference>
<dbReference type="PANTHER" id="PTHR43311:SF2">
    <property type="entry name" value="GLUTAMATE--TRNA LIGASE, MITOCHONDRIAL-RELATED"/>
    <property type="match status" value="1"/>
</dbReference>
<dbReference type="Pfam" id="PF19269">
    <property type="entry name" value="Anticodon_2"/>
    <property type="match status" value="1"/>
</dbReference>
<dbReference type="Pfam" id="PF00749">
    <property type="entry name" value="tRNA-synt_1c"/>
    <property type="match status" value="1"/>
</dbReference>
<dbReference type="PRINTS" id="PR00987">
    <property type="entry name" value="TRNASYNTHGLU"/>
</dbReference>
<dbReference type="SUPFAM" id="SSF48163">
    <property type="entry name" value="An anticodon-binding domain of class I aminoacyl-tRNA synthetases"/>
    <property type="match status" value="1"/>
</dbReference>
<dbReference type="SUPFAM" id="SSF52374">
    <property type="entry name" value="Nucleotidylyl transferase"/>
    <property type="match status" value="1"/>
</dbReference>
<dbReference type="PROSITE" id="PS00178">
    <property type="entry name" value="AA_TRNA_LIGASE_I"/>
    <property type="match status" value="1"/>
</dbReference>
<name>SYE_DESRM</name>
<proteinExistence type="inferred from homology"/>
<keyword id="KW-0030">Aminoacyl-tRNA synthetase</keyword>
<keyword id="KW-0067">ATP-binding</keyword>
<keyword id="KW-0963">Cytoplasm</keyword>
<keyword id="KW-0436">Ligase</keyword>
<keyword id="KW-0547">Nucleotide-binding</keyword>
<keyword id="KW-0648">Protein biosynthesis</keyword>
<keyword id="KW-1185">Reference proteome</keyword>
<organism>
    <name type="scientific">Desulforamulus reducens (strain ATCC BAA-1160 / DSM 100696 / MI-1)</name>
    <name type="common">Desulfotomaculum reducens</name>
    <dbReference type="NCBI Taxonomy" id="349161"/>
    <lineage>
        <taxon>Bacteria</taxon>
        <taxon>Bacillati</taxon>
        <taxon>Bacillota</taxon>
        <taxon>Clostridia</taxon>
        <taxon>Eubacteriales</taxon>
        <taxon>Peptococcaceae</taxon>
        <taxon>Desulforamulus</taxon>
    </lineage>
</organism>
<gene>
    <name evidence="1" type="primary">gltX</name>
    <name type="ordered locus">Dred_0191</name>
</gene>
<accession>A4J0Y7</accession>
<evidence type="ECO:0000255" key="1">
    <source>
        <dbReference type="HAMAP-Rule" id="MF_00022"/>
    </source>
</evidence>
<comment type="function">
    <text evidence="1">Catalyzes the attachment of glutamate to tRNA(Glu) in a two-step reaction: glutamate is first activated by ATP to form Glu-AMP and then transferred to the acceptor end of tRNA(Glu).</text>
</comment>
<comment type="catalytic activity">
    <reaction evidence="1">
        <text>tRNA(Glu) + L-glutamate + ATP = L-glutamyl-tRNA(Glu) + AMP + diphosphate</text>
        <dbReference type="Rhea" id="RHEA:23540"/>
        <dbReference type="Rhea" id="RHEA-COMP:9663"/>
        <dbReference type="Rhea" id="RHEA-COMP:9680"/>
        <dbReference type="ChEBI" id="CHEBI:29985"/>
        <dbReference type="ChEBI" id="CHEBI:30616"/>
        <dbReference type="ChEBI" id="CHEBI:33019"/>
        <dbReference type="ChEBI" id="CHEBI:78442"/>
        <dbReference type="ChEBI" id="CHEBI:78520"/>
        <dbReference type="ChEBI" id="CHEBI:456215"/>
        <dbReference type="EC" id="6.1.1.17"/>
    </reaction>
</comment>
<comment type="subunit">
    <text evidence="1">Monomer.</text>
</comment>
<comment type="subcellular location">
    <subcellularLocation>
        <location evidence="1">Cytoplasm</location>
    </subcellularLocation>
</comment>
<comment type="similarity">
    <text evidence="1">Belongs to the class-I aminoacyl-tRNA synthetase family. Glutamate--tRNA ligase type 1 subfamily.</text>
</comment>
<sequence>MSIRVRFAPSPTGPLHIGGARSALFNWLYARHHGGQFLVRIEDTDMERSSRESEENILNALRWLGIDWDEGIEVGGPNGPYRQTERLDIYRQLAKELVDAGHAYYCYCSEEELAVEREALMEKGELPRYLGRCRNLCPEDKAKFEAEGKKPVLRFRVPENQTITINDHVRGQVEFESNGIGDFIIMKSDNIPTYNFAVVVDDHDMGITHVVRAEEHLSNTPRQILIYEALGWQKPEFAHISLILGKDRSKMSKRHGATSIEQYHNLGYLPEALVNFLALLGWSPGGEEEIFTLKEIKEQFTLDRVAKNPAVFDIDKLNWLNGHYIRQASVERLTKLAVPYLQGAGYLKEEISTEKMAWLEQVVAIARNYISYMQEITQHVDVFFRDNVEITEEDAKQVQGWEQMPVVMKAAHELFSAANELTEESVKAIIKAIGKQTGLKGKFIFQPLRVGITGQTHGPELHQIIPVIGKERTLARLEAALK</sequence>